<accession>Q02G49</accession>
<dbReference type="EC" id="2.1.1.172" evidence="1"/>
<dbReference type="EMBL" id="CP000438">
    <property type="protein sequence ID" value="ABJ14006.1"/>
    <property type="molecule type" value="Genomic_DNA"/>
</dbReference>
<dbReference type="RefSeq" id="WP_003141607.1">
    <property type="nucleotide sequence ID" value="NZ_CP034244.1"/>
</dbReference>
<dbReference type="SMR" id="Q02G49"/>
<dbReference type="KEGG" id="pau:PA14_61220"/>
<dbReference type="PseudoCAP" id="PA14_61220"/>
<dbReference type="HOGENOM" id="CLU_049581_0_0_6"/>
<dbReference type="BioCyc" id="PAER208963:G1G74-5176-MONOMER"/>
<dbReference type="Proteomes" id="UP000000653">
    <property type="component" value="Chromosome"/>
</dbReference>
<dbReference type="GO" id="GO:0005737">
    <property type="term" value="C:cytoplasm"/>
    <property type="evidence" value="ECO:0007669"/>
    <property type="project" value="UniProtKB-SubCell"/>
</dbReference>
<dbReference type="GO" id="GO:0052914">
    <property type="term" value="F:16S rRNA (guanine(1207)-N(2))-methyltransferase activity"/>
    <property type="evidence" value="ECO:0007669"/>
    <property type="project" value="UniProtKB-EC"/>
</dbReference>
<dbReference type="GO" id="GO:0003676">
    <property type="term" value="F:nucleic acid binding"/>
    <property type="evidence" value="ECO:0007669"/>
    <property type="project" value="InterPro"/>
</dbReference>
<dbReference type="CDD" id="cd02440">
    <property type="entry name" value="AdoMet_MTases"/>
    <property type="match status" value="1"/>
</dbReference>
<dbReference type="Gene3D" id="3.40.50.150">
    <property type="entry name" value="Vaccinia Virus protein VP39"/>
    <property type="match status" value="2"/>
</dbReference>
<dbReference type="HAMAP" id="MF_01862">
    <property type="entry name" value="16SrRNA_methyltr_C"/>
    <property type="match status" value="1"/>
</dbReference>
<dbReference type="InterPro" id="IPR002052">
    <property type="entry name" value="DNA_methylase_N6_adenine_CS"/>
</dbReference>
<dbReference type="InterPro" id="IPR013675">
    <property type="entry name" value="Mtase_sm_N"/>
</dbReference>
<dbReference type="InterPro" id="IPR023543">
    <property type="entry name" value="rRNA_ssu_MeTfrase_C"/>
</dbReference>
<dbReference type="InterPro" id="IPR046977">
    <property type="entry name" value="RsmC/RlmG"/>
</dbReference>
<dbReference type="InterPro" id="IPR029063">
    <property type="entry name" value="SAM-dependent_MTases_sf"/>
</dbReference>
<dbReference type="InterPro" id="IPR007848">
    <property type="entry name" value="Small_mtfrase_dom"/>
</dbReference>
<dbReference type="PANTHER" id="PTHR47816">
    <property type="entry name" value="RIBOSOMAL RNA SMALL SUBUNIT METHYLTRANSFERASE C"/>
    <property type="match status" value="1"/>
</dbReference>
<dbReference type="PANTHER" id="PTHR47816:SF4">
    <property type="entry name" value="RIBOSOMAL RNA SMALL SUBUNIT METHYLTRANSFERASE C"/>
    <property type="match status" value="1"/>
</dbReference>
<dbReference type="Pfam" id="PF05175">
    <property type="entry name" value="MTS"/>
    <property type="match status" value="1"/>
</dbReference>
<dbReference type="Pfam" id="PF08468">
    <property type="entry name" value="MTS_N"/>
    <property type="match status" value="1"/>
</dbReference>
<dbReference type="SUPFAM" id="SSF53335">
    <property type="entry name" value="S-adenosyl-L-methionine-dependent methyltransferases"/>
    <property type="match status" value="1"/>
</dbReference>
<organism>
    <name type="scientific">Pseudomonas aeruginosa (strain UCBPP-PA14)</name>
    <dbReference type="NCBI Taxonomy" id="208963"/>
    <lineage>
        <taxon>Bacteria</taxon>
        <taxon>Pseudomonadati</taxon>
        <taxon>Pseudomonadota</taxon>
        <taxon>Gammaproteobacteria</taxon>
        <taxon>Pseudomonadales</taxon>
        <taxon>Pseudomonadaceae</taxon>
        <taxon>Pseudomonas</taxon>
    </lineage>
</organism>
<reference key="1">
    <citation type="journal article" date="2006" name="Genome Biol.">
        <title>Genomic analysis reveals that Pseudomonas aeruginosa virulence is combinatorial.</title>
        <authorList>
            <person name="Lee D.G."/>
            <person name="Urbach J.M."/>
            <person name="Wu G."/>
            <person name="Liberati N.T."/>
            <person name="Feinbaum R.L."/>
            <person name="Miyata S."/>
            <person name="Diggins L.T."/>
            <person name="He J."/>
            <person name="Saucier M."/>
            <person name="Deziel E."/>
            <person name="Friedman L."/>
            <person name="Li L."/>
            <person name="Grills G."/>
            <person name="Montgomery K."/>
            <person name="Kucherlapati R."/>
            <person name="Rahme L.G."/>
            <person name="Ausubel F.M."/>
        </authorList>
    </citation>
    <scope>NUCLEOTIDE SEQUENCE [LARGE SCALE GENOMIC DNA]</scope>
    <source>
        <strain>UCBPP-PA14</strain>
    </source>
</reference>
<proteinExistence type="inferred from homology"/>
<protein>
    <recommendedName>
        <fullName evidence="1">Ribosomal RNA small subunit methyltransferase C</fullName>
        <ecNumber evidence="1">2.1.1.172</ecNumber>
    </recommendedName>
    <alternativeName>
        <fullName evidence="1">16S rRNA m2G1207 methyltransferase</fullName>
    </alternativeName>
    <alternativeName>
        <fullName evidence="1">rRNA (guanine-N(2)-)-methyltransferase RsmC</fullName>
    </alternativeName>
</protein>
<comment type="function">
    <text evidence="1">Specifically methylates the guanine in position 1207 of 16S rRNA in the 30S particle.</text>
</comment>
<comment type="catalytic activity">
    <reaction evidence="1">
        <text>guanosine(1207) in 16S rRNA + S-adenosyl-L-methionine = N(2)-methylguanosine(1207) in 16S rRNA + S-adenosyl-L-homocysteine + H(+)</text>
        <dbReference type="Rhea" id="RHEA:42736"/>
        <dbReference type="Rhea" id="RHEA-COMP:10213"/>
        <dbReference type="Rhea" id="RHEA-COMP:10214"/>
        <dbReference type="ChEBI" id="CHEBI:15378"/>
        <dbReference type="ChEBI" id="CHEBI:57856"/>
        <dbReference type="ChEBI" id="CHEBI:59789"/>
        <dbReference type="ChEBI" id="CHEBI:74269"/>
        <dbReference type="ChEBI" id="CHEBI:74481"/>
        <dbReference type="EC" id="2.1.1.172"/>
    </reaction>
</comment>
<comment type="subunit">
    <text evidence="1">Monomer.</text>
</comment>
<comment type="subcellular location">
    <subcellularLocation>
        <location evidence="1">Cytoplasm</location>
    </subcellularLocation>
</comment>
<comment type="similarity">
    <text evidence="1">Belongs to the methyltransferase superfamily. RsmC family.</text>
</comment>
<evidence type="ECO:0000255" key="1">
    <source>
        <dbReference type="HAMAP-Rule" id="MF_01862"/>
    </source>
</evidence>
<sequence length="332" mass="36009">MDPRSEVLLRQRHLFATPLLLAGLPADDLLAELPQAQGWSWHAGEQAQLDARFPDRSRFDTRAPTGAWTSAVLFLPKSRELTDYLLASLAARLPGGELFLVGEKRGGIERASKQLAAYGKPRKLDSARHCQLWQVRIEQAPAEPDLHALAQRYSLPLADGELQVVSLPGVFSHGRLDRGSALLLGQLQALPGGHLLDFGCGAGVLGAVLKRRYPASRLTLLDVDAFAVESSRLTLAANGLDGEVIAADGIDGAPRELAAIVSNPPFHQGVHTDYQASERLLQRAAEHLAPGGELRLVANSFLKYPPLIERHLGPCRTLAEGDGFRIYSARRS</sequence>
<name>RSMC_PSEAB</name>
<feature type="chain" id="PRO_0000369737" description="Ribosomal RNA small subunit methyltransferase C">
    <location>
        <begin position="1"/>
        <end position="332"/>
    </location>
</feature>
<keyword id="KW-0963">Cytoplasm</keyword>
<keyword id="KW-0489">Methyltransferase</keyword>
<keyword id="KW-0698">rRNA processing</keyword>
<keyword id="KW-0949">S-adenosyl-L-methionine</keyword>
<keyword id="KW-0808">Transferase</keyword>
<gene>
    <name evidence="1" type="primary">rsmC</name>
    <name type="ordered locus">PA14_61220</name>
</gene>